<evidence type="ECO:0000305" key="1"/>
<sequence>MSYNCCSGNFSSRSFGGYLHYPGCNPYSTALCSPSICQLGSSLYRNCQKTCWEPTSCRKSCYRRRTSMLCSPCQTTCSRSLGFGSSSCHSQGYGSRSCYSLGSGSSGFRFLKYGGCGFPSLSYGSRFCYPNYLASRAWQSSCYRPICGSRFYQFTC</sequence>
<reference key="1">
    <citation type="submission" date="2004-11" db="EMBL/GenBank/DDBJ databases">
        <title>Comparative analysis of KAP13.3 and KAP13.4 genes in primates.</title>
        <authorList>
            <person name="Kim H."/>
            <person name="Park E."/>
        </authorList>
    </citation>
    <scope>NUCLEOTIDE SEQUENCE [GENOMIC DNA]</scope>
</reference>
<dbReference type="EMBL" id="AB195301">
    <property type="protein sequence ID" value="BAD98708.1"/>
    <property type="molecule type" value="Genomic_DNA"/>
</dbReference>
<dbReference type="RefSeq" id="XP_015302173.1">
    <property type="nucleotide sequence ID" value="XM_015446687.1"/>
</dbReference>
<dbReference type="Ensembl" id="ENSMFAT00000079627.1">
    <property type="protein sequence ID" value="ENSMFAP00000060854.1"/>
    <property type="gene ID" value="ENSMFAG00000061177.1"/>
</dbReference>
<dbReference type="GeneID" id="102124928"/>
<dbReference type="KEGG" id="mcf:102124928"/>
<dbReference type="eggNOG" id="ENOG502STG2">
    <property type="taxonomic scope" value="Eukaryota"/>
</dbReference>
<dbReference type="GeneTree" id="ENSGT00940000162756"/>
<dbReference type="Proteomes" id="UP000233100">
    <property type="component" value="Chromosome 3"/>
</dbReference>
<dbReference type="GO" id="GO:0005829">
    <property type="term" value="C:cytosol"/>
    <property type="evidence" value="ECO:0007669"/>
    <property type="project" value="UniProtKB-ARBA"/>
</dbReference>
<dbReference type="GO" id="GO:0005882">
    <property type="term" value="C:intermediate filament"/>
    <property type="evidence" value="ECO:0007669"/>
    <property type="project" value="UniProtKB-KW"/>
</dbReference>
<dbReference type="InterPro" id="IPR007951">
    <property type="entry name" value="KRTAP_PMG"/>
</dbReference>
<dbReference type="InterPro" id="IPR001368">
    <property type="entry name" value="TNFR/NGFR_Cys_rich_reg"/>
</dbReference>
<dbReference type="Pfam" id="PF05287">
    <property type="entry name" value="PMG"/>
    <property type="match status" value="1"/>
</dbReference>
<feature type="chain" id="PRO_0000185207" description="Keratin-associated protein 13-4">
    <location>
        <begin position="1"/>
        <end position="156"/>
    </location>
</feature>
<feature type="repeat" description="1">
    <location>
        <begin position="37"/>
        <end position="46"/>
    </location>
</feature>
<feature type="repeat" description="2">
    <location>
        <begin position="47"/>
        <end position="56"/>
    </location>
</feature>
<feature type="repeat" description="3">
    <location>
        <begin position="57"/>
        <end position="66"/>
    </location>
</feature>
<feature type="repeat" description="4">
    <location>
        <begin position="73"/>
        <end position="82"/>
    </location>
</feature>
<feature type="region of interest" description="4 X 10 AA approximate repeats">
    <location>
        <begin position="37"/>
        <end position="82"/>
    </location>
</feature>
<comment type="function">
    <text>In the hair cortex, hair keratin intermediate filaments are embedded in an interfilamentous matrix, consisting of hair keratin-associated proteins (KRTAP), which are essential for the formation of a rigid and resistant hair shaft through their extensive disulfide bond cross-linking with abundant cysteine residues of hair keratins. The matrix proteins include the high-sulfur and high-glycine-tyrosine keratins.</text>
</comment>
<comment type="subunit">
    <text>Interacts with hair keratins.</text>
</comment>
<comment type="similarity">
    <text evidence="1">Belongs to the PMG family.</text>
</comment>
<gene>
    <name type="primary">KRTAP13-4</name>
    <name type="synonym">KAP13.4</name>
</gene>
<keyword id="KW-0416">Keratin</keyword>
<keyword id="KW-1185">Reference proteome</keyword>
<keyword id="KW-0677">Repeat</keyword>
<organism>
    <name type="scientific">Macaca fascicularis</name>
    <name type="common">Crab-eating macaque</name>
    <name type="synonym">Cynomolgus monkey</name>
    <dbReference type="NCBI Taxonomy" id="9541"/>
    <lineage>
        <taxon>Eukaryota</taxon>
        <taxon>Metazoa</taxon>
        <taxon>Chordata</taxon>
        <taxon>Craniata</taxon>
        <taxon>Vertebrata</taxon>
        <taxon>Euteleostomi</taxon>
        <taxon>Mammalia</taxon>
        <taxon>Eutheria</taxon>
        <taxon>Euarchontoglires</taxon>
        <taxon>Primates</taxon>
        <taxon>Haplorrhini</taxon>
        <taxon>Catarrhini</taxon>
        <taxon>Cercopithecidae</taxon>
        <taxon>Cercopithecinae</taxon>
        <taxon>Macaca</taxon>
    </lineage>
</organism>
<proteinExistence type="inferred from homology"/>
<name>KR134_MACFA</name>
<protein>
    <recommendedName>
        <fullName>Keratin-associated protein 13-4</fullName>
    </recommendedName>
</protein>
<accession>Q4W7G9</accession>